<sequence length="220" mass="23472">MKFEKYIDHTLLKPESTRTQIDQIIDEAKAYNFKSVCVNPTHVKYAAERLADSEVLVCTVIGFPLGASTTATKAFETEDAIQNGADEIDMVINIGALKDGRFDDVQQDIEAVVKAAKGHTVKVIIETVLLDHDEIVKASELTKAAGADFVKTSTGFAGGGATAEDVKLMKDTVGADVEVKASGGVRNLEDFNKMVEAGATRIGASAGVQIMQGLEADSDY</sequence>
<dbReference type="EC" id="4.1.2.4" evidence="1"/>
<dbReference type="EMBL" id="CP000046">
    <property type="protein sequence ID" value="AAW37424.1"/>
    <property type="molecule type" value="Genomic_DNA"/>
</dbReference>
<dbReference type="SMR" id="Q5HJN0"/>
<dbReference type="KEGG" id="sac:SACOL0123"/>
<dbReference type="HOGENOM" id="CLU_053595_0_1_9"/>
<dbReference type="UniPathway" id="UPA00002">
    <property type="reaction ID" value="UER00468"/>
</dbReference>
<dbReference type="Proteomes" id="UP000000530">
    <property type="component" value="Chromosome"/>
</dbReference>
<dbReference type="GO" id="GO:0005737">
    <property type="term" value="C:cytoplasm"/>
    <property type="evidence" value="ECO:0007669"/>
    <property type="project" value="UniProtKB-SubCell"/>
</dbReference>
<dbReference type="GO" id="GO:0004139">
    <property type="term" value="F:deoxyribose-phosphate aldolase activity"/>
    <property type="evidence" value="ECO:0007669"/>
    <property type="project" value="UniProtKB-UniRule"/>
</dbReference>
<dbReference type="GO" id="GO:0006018">
    <property type="term" value="P:2-deoxyribose 1-phosphate catabolic process"/>
    <property type="evidence" value="ECO:0007669"/>
    <property type="project" value="UniProtKB-UniRule"/>
</dbReference>
<dbReference type="GO" id="GO:0016052">
    <property type="term" value="P:carbohydrate catabolic process"/>
    <property type="evidence" value="ECO:0007669"/>
    <property type="project" value="TreeGrafter"/>
</dbReference>
<dbReference type="GO" id="GO:0009264">
    <property type="term" value="P:deoxyribonucleotide catabolic process"/>
    <property type="evidence" value="ECO:0007669"/>
    <property type="project" value="InterPro"/>
</dbReference>
<dbReference type="CDD" id="cd00959">
    <property type="entry name" value="DeoC"/>
    <property type="match status" value="1"/>
</dbReference>
<dbReference type="FunFam" id="3.20.20.70:FF:000044">
    <property type="entry name" value="Deoxyribose-phosphate aldolase"/>
    <property type="match status" value="1"/>
</dbReference>
<dbReference type="Gene3D" id="3.20.20.70">
    <property type="entry name" value="Aldolase class I"/>
    <property type="match status" value="1"/>
</dbReference>
<dbReference type="HAMAP" id="MF_00114">
    <property type="entry name" value="DeoC_type1"/>
    <property type="match status" value="1"/>
</dbReference>
<dbReference type="InterPro" id="IPR013785">
    <property type="entry name" value="Aldolase_TIM"/>
</dbReference>
<dbReference type="InterPro" id="IPR011343">
    <property type="entry name" value="DeoC"/>
</dbReference>
<dbReference type="InterPro" id="IPR002915">
    <property type="entry name" value="DeoC/FbaB/LacD_aldolase"/>
</dbReference>
<dbReference type="InterPro" id="IPR028581">
    <property type="entry name" value="DeoC_typeI"/>
</dbReference>
<dbReference type="NCBIfam" id="TIGR00126">
    <property type="entry name" value="deoC"/>
    <property type="match status" value="1"/>
</dbReference>
<dbReference type="PANTHER" id="PTHR10889">
    <property type="entry name" value="DEOXYRIBOSE-PHOSPHATE ALDOLASE"/>
    <property type="match status" value="1"/>
</dbReference>
<dbReference type="PANTHER" id="PTHR10889:SF1">
    <property type="entry name" value="DEOXYRIBOSE-PHOSPHATE ALDOLASE"/>
    <property type="match status" value="1"/>
</dbReference>
<dbReference type="Pfam" id="PF01791">
    <property type="entry name" value="DeoC"/>
    <property type="match status" value="1"/>
</dbReference>
<dbReference type="PIRSF" id="PIRSF001357">
    <property type="entry name" value="DeoC"/>
    <property type="match status" value="1"/>
</dbReference>
<dbReference type="SMART" id="SM01133">
    <property type="entry name" value="DeoC"/>
    <property type="match status" value="1"/>
</dbReference>
<dbReference type="SUPFAM" id="SSF51569">
    <property type="entry name" value="Aldolase"/>
    <property type="match status" value="1"/>
</dbReference>
<name>DEOC1_STAAC</name>
<gene>
    <name evidence="1" type="primary">deoC1</name>
    <name type="ordered locus">SACOL0123</name>
</gene>
<evidence type="ECO:0000255" key="1">
    <source>
        <dbReference type="HAMAP-Rule" id="MF_00114"/>
    </source>
</evidence>
<comment type="function">
    <text evidence="1">Catalyzes a reversible aldol reaction between acetaldehyde and D-glyceraldehyde 3-phosphate to generate 2-deoxy-D-ribose 5-phosphate.</text>
</comment>
<comment type="catalytic activity">
    <reaction evidence="1">
        <text>2-deoxy-D-ribose 5-phosphate = D-glyceraldehyde 3-phosphate + acetaldehyde</text>
        <dbReference type="Rhea" id="RHEA:12821"/>
        <dbReference type="ChEBI" id="CHEBI:15343"/>
        <dbReference type="ChEBI" id="CHEBI:59776"/>
        <dbReference type="ChEBI" id="CHEBI:62877"/>
        <dbReference type="EC" id="4.1.2.4"/>
    </reaction>
</comment>
<comment type="pathway">
    <text evidence="1">Carbohydrate degradation; 2-deoxy-D-ribose 1-phosphate degradation; D-glyceraldehyde 3-phosphate and acetaldehyde from 2-deoxy-alpha-D-ribose 1-phosphate: step 2/2.</text>
</comment>
<comment type="subcellular location">
    <subcellularLocation>
        <location evidence="1">Cytoplasm</location>
    </subcellularLocation>
</comment>
<comment type="similarity">
    <text evidence="1">Belongs to the DeoC/FbaB aldolase family. DeoC type 1 subfamily.</text>
</comment>
<accession>Q5HJN0</accession>
<feature type="chain" id="PRO_0000057255" description="Deoxyribose-phosphate aldolase 1">
    <location>
        <begin position="1"/>
        <end position="220"/>
    </location>
</feature>
<feature type="active site" description="Proton donor/acceptor" evidence="1">
    <location>
        <position position="89"/>
    </location>
</feature>
<feature type="active site" description="Schiff-base intermediate with acetaldehyde" evidence="1">
    <location>
        <position position="151"/>
    </location>
</feature>
<feature type="active site" description="Proton donor/acceptor" evidence="1">
    <location>
        <position position="180"/>
    </location>
</feature>
<organism>
    <name type="scientific">Staphylococcus aureus (strain COL)</name>
    <dbReference type="NCBI Taxonomy" id="93062"/>
    <lineage>
        <taxon>Bacteria</taxon>
        <taxon>Bacillati</taxon>
        <taxon>Bacillota</taxon>
        <taxon>Bacilli</taxon>
        <taxon>Bacillales</taxon>
        <taxon>Staphylococcaceae</taxon>
        <taxon>Staphylococcus</taxon>
    </lineage>
</organism>
<protein>
    <recommendedName>
        <fullName evidence="1">Deoxyribose-phosphate aldolase 1</fullName>
        <shortName evidence="1">DERA 1</shortName>
        <ecNumber evidence="1">4.1.2.4</ecNumber>
    </recommendedName>
    <alternativeName>
        <fullName evidence="1">2-deoxy-D-ribose 5-phosphate aldolase 1</fullName>
    </alternativeName>
    <alternativeName>
        <fullName evidence="1">Phosphodeoxyriboaldolase 1</fullName>
        <shortName evidence="1">Deoxyriboaldolase 1</shortName>
    </alternativeName>
</protein>
<reference key="1">
    <citation type="journal article" date="2005" name="J. Bacteriol.">
        <title>Insights on evolution of virulence and resistance from the complete genome analysis of an early methicillin-resistant Staphylococcus aureus strain and a biofilm-producing methicillin-resistant Staphylococcus epidermidis strain.</title>
        <authorList>
            <person name="Gill S.R."/>
            <person name="Fouts D.E."/>
            <person name="Archer G.L."/>
            <person name="Mongodin E.F."/>
            <person name="DeBoy R.T."/>
            <person name="Ravel J."/>
            <person name="Paulsen I.T."/>
            <person name="Kolonay J.F."/>
            <person name="Brinkac L.M."/>
            <person name="Beanan M.J."/>
            <person name="Dodson R.J."/>
            <person name="Daugherty S.C."/>
            <person name="Madupu R."/>
            <person name="Angiuoli S.V."/>
            <person name="Durkin A.S."/>
            <person name="Haft D.H."/>
            <person name="Vamathevan J.J."/>
            <person name="Khouri H."/>
            <person name="Utterback T.R."/>
            <person name="Lee C."/>
            <person name="Dimitrov G."/>
            <person name="Jiang L."/>
            <person name="Qin H."/>
            <person name="Weidman J."/>
            <person name="Tran K."/>
            <person name="Kang K.H."/>
            <person name="Hance I.R."/>
            <person name="Nelson K.E."/>
            <person name="Fraser C.M."/>
        </authorList>
    </citation>
    <scope>NUCLEOTIDE SEQUENCE [LARGE SCALE GENOMIC DNA]</scope>
    <source>
        <strain>COL</strain>
    </source>
</reference>
<keyword id="KW-0963">Cytoplasm</keyword>
<keyword id="KW-0456">Lyase</keyword>
<keyword id="KW-0704">Schiff base</keyword>
<proteinExistence type="inferred from homology"/>